<comment type="function">
    <text evidence="1">Could be a nuclease involved in processing of the 5'-end of pre-16S rRNA.</text>
</comment>
<comment type="subcellular location">
    <subcellularLocation>
        <location evidence="1">Cytoplasm</location>
    </subcellularLocation>
</comment>
<comment type="similarity">
    <text evidence="1">Belongs to the YqgF nuclease family.</text>
</comment>
<evidence type="ECO:0000255" key="1">
    <source>
        <dbReference type="HAMAP-Rule" id="MF_00651"/>
    </source>
</evidence>
<reference key="1">
    <citation type="journal article" date="2004" name="Nat. Genet.">
        <title>Evidence in the Legionella pneumophila genome for exploitation of host cell functions and high genome plasticity.</title>
        <authorList>
            <person name="Cazalet C."/>
            <person name="Rusniok C."/>
            <person name="Brueggemann H."/>
            <person name="Zidane N."/>
            <person name="Magnier A."/>
            <person name="Ma L."/>
            <person name="Tichit M."/>
            <person name="Jarraud S."/>
            <person name="Bouchier C."/>
            <person name="Vandenesch F."/>
            <person name="Kunst F."/>
            <person name="Etienne J."/>
            <person name="Glaser P."/>
            <person name="Buchrieser C."/>
        </authorList>
    </citation>
    <scope>NUCLEOTIDE SEQUENCE [LARGE SCALE GENOMIC DNA]</scope>
    <source>
        <strain>Paris</strain>
    </source>
</reference>
<protein>
    <recommendedName>
        <fullName evidence="1">Putative pre-16S rRNA nuclease</fullName>
        <ecNumber evidence="1">3.1.-.-</ecNumber>
    </recommendedName>
</protein>
<accession>Q5X7G8</accession>
<proteinExistence type="inferred from homology"/>
<name>YQGF_LEGPA</name>
<organism>
    <name type="scientific">Legionella pneumophila (strain Paris)</name>
    <dbReference type="NCBI Taxonomy" id="297246"/>
    <lineage>
        <taxon>Bacteria</taxon>
        <taxon>Pseudomonadati</taxon>
        <taxon>Pseudomonadota</taxon>
        <taxon>Gammaproteobacteria</taxon>
        <taxon>Legionellales</taxon>
        <taxon>Legionellaceae</taxon>
        <taxon>Legionella</taxon>
    </lineage>
</organism>
<gene>
    <name type="ordered locus">lpp0637</name>
</gene>
<sequence length="139" mass="15622">MPRGVYLGFDFGYKRIGVAVGQRLTCSASPLSTIEAKAGIPDWNTIQKVITQWNPQALIVGLPTCIDDRELYTTSAARHFAKQLHKRFSLPVHLVDERLSTVEARGYLFEQGGYRQIKKAEVDSIAACVILEQWLQQSE</sequence>
<feature type="chain" id="PRO_0000172080" description="Putative pre-16S rRNA nuclease">
    <location>
        <begin position="1"/>
        <end position="139"/>
    </location>
</feature>
<dbReference type="EC" id="3.1.-.-" evidence="1"/>
<dbReference type="EMBL" id="CR628336">
    <property type="protein sequence ID" value="CAH11785.1"/>
    <property type="molecule type" value="Genomic_DNA"/>
</dbReference>
<dbReference type="SMR" id="Q5X7G8"/>
<dbReference type="KEGG" id="lpp:lpp0637"/>
<dbReference type="LegioList" id="lpp0637"/>
<dbReference type="HOGENOM" id="CLU_098240_3_0_6"/>
<dbReference type="GO" id="GO:0005829">
    <property type="term" value="C:cytosol"/>
    <property type="evidence" value="ECO:0007669"/>
    <property type="project" value="TreeGrafter"/>
</dbReference>
<dbReference type="GO" id="GO:0004518">
    <property type="term" value="F:nuclease activity"/>
    <property type="evidence" value="ECO:0007669"/>
    <property type="project" value="UniProtKB-KW"/>
</dbReference>
<dbReference type="GO" id="GO:0000967">
    <property type="term" value="P:rRNA 5'-end processing"/>
    <property type="evidence" value="ECO:0007669"/>
    <property type="project" value="UniProtKB-UniRule"/>
</dbReference>
<dbReference type="CDD" id="cd16964">
    <property type="entry name" value="YqgF"/>
    <property type="match status" value="1"/>
</dbReference>
<dbReference type="Gene3D" id="3.30.420.140">
    <property type="entry name" value="YqgF/RNase H-like domain"/>
    <property type="match status" value="1"/>
</dbReference>
<dbReference type="HAMAP" id="MF_00651">
    <property type="entry name" value="Nuclease_YqgF"/>
    <property type="match status" value="1"/>
</dbReference>
<dbReference type="InterPro" id="IPR012337">
    <property type="entry name" value="RNaseH-like_sf"/>
</dbReference>
<dbReference type="InterPro" id="IPR005227">
    <property type="entry name" value="YqgF"/>
</dbReference>
<dbReference type="InterPro" id="IPR006641">
    <property type="entry name" value="YqgF/RNaseH-like_dom"/>
</dbReference>
<dbReference type="InterPro" id="IPR037027">
    <property type="entry name" value="YqgF/RNaseH-like_dom_sf"/>
</dbReference>
<dbReference type="NCBIfam" id="TIGR00250">
    <property type="entry name" value="RNAse_H_YqgF"/>
    <property type="match status" value="1"/>
</dbReference>
<dbReference type="PANTHER" id="PTHR33317">
    <property type="entry name" value="POLYNUCLEOTIDYL TRANSFERASE, RIBONUCLEASE H-LIKE SUPERFAMILY PROTEIN"/>
    <property type="match status" value="1"/>
</dbReference>
<dbReference type="PANTHER" id="PTHR33317:SF4">
    <property type="entry name" value="POLYNUCLEOTIDYL TRANSFERASE, RIBONUCLEASE H-LIKE SUPERFAMILY PROTEIN"/>
    <property type="match status" value="1"/>
</dbReference>
<dbReference type="Pfam" id="PF03652">
    <property type="entry name" value="RuvX"/>
    <property type="match status" value="1"/>
</dbReference>
<dbReference type="SMART" id="SM00732">
    <property type="entry name" value="YqgFc"/>
    <property type="match status" value="1"/>
</dbReference>
<dbReference type="SUPFAM" id="SSF53098">
    <property type="entry name" value="Ribonuclease H-like"/>
    <property type="match status" value="1"/>
</dbReference>
<keyword id="KW-0963">Cytoplasm</keyword>
<keyword id="KW-0378">Hydrolase</keyword>
<keyword id="KW-0540">Nuclease</keyword>
<keyword id="KW-0690">Ribosome biogenesis</keyword>